<organism>
    <name type="scientific">Desulforapulum autotrophicum (strain ATCC 43914 / DSM 3382 / VKM B-1955 / HRM2)</name>
    <name type="common">Desulfobacterium autotrophicum</name>
    <dbReference type="NCBI Taxonomy" id="177437"/>
    <lineage>
        <taxon>Bacteria</taxon>
        <taxon>Pseudomonadati</taxon>
        <taxon>Thermodesulfobacteriota</taxon>
        <taxon>Desulfobacteria</taxon>
        <taxon>Desulfobacterales</taxon>
        <taxon>Desulfobacteraceae</taxon>
        <taxon>Desulforapulum</taxon>
    </lineage>
</organism>
<comment type="function">
    <text evidence="1">Binds together with bS18 to 16S ribosomal RNA.</text>
</comment>
<comment type="similarity">
    <text evidence="1">Belongs to the bacterial ribosomal protein bS6 family.</text>
</comment>
<protein>
    <recommendedName>
        <fullName evidence="1">Small ribosomal subunit protein bS6</fullName>
    </recommendedName>
    <alternativeName>
        <fullName evidence="3">30S ribosomal protein S6</fullName>
    </alternativeName>
</protein>
<evidence type="ECO:0000255" key="1">
    <source>
        <dbReference type="HAMAP-Rule" id="MF_00360"/>
    </source>
</evidence>
<evidence type="ECO:0000256" key="2">
    <source>
        <dbReference type="SAM" id="MobiDB-lite"/>
    </source>
</evidence>
<evidence type="ECO:0000305" key="3"/>
<name>RS6_DESAH</name>
<reference key="1">
    <citation type="journal article" date="2009" name="Environ. Microbiol.">
        <title>Genome sequence of Desulfobacterium autotrophicum HRM2, a marine sulfate reducer oxidizing organic carbon completely to carbon dioxide.</title>
        <authorList>
            <person name="Strittmatter A.W."/>
            <person name="Liesegang H."/>
            <person name="Rabus R."/>
            <person name="Decker I."/>
            <person name="Amann J."/>
            <person name="Andres S."/>
            <person name="Henne A."/>
            <person name="Fricke W.F."/>
            <person name="Martinez-Arias R."/>
            <person name="Bartels D."/>
            <person name="Goesmann A."/>
            <person name="Krause L."/>
            <person name="Puehler A."/>
            <person name="Klenk H.P."/>
            <person name="Richter M."/>
            <person name="Schuler M."/>
            <person name="Gloeckner F.O."/>
            <person name="Meyerdierks A."/>
            <person name="Gottschalk G."/>
            <person name="Amann R."/>
        </authorList>
    </citation>
    <scope>NUCLEOTIDE SEQUENCE [LARGE SCALE GENOMIC DNA]</scope>
    <source>
        <strain>ATCC 43914 / DSM 3382 / VKM B-1955 / HRM2</strain>
    </source>
</reference>
<sequence>MRMYETIFITDPDLQDEVRNTLFDRFKGILEQEGGILANFDDWGNKKLAYEIAKKPRGHYVCMTYGGTGTLVTELERNFRLDDKILKYMTILLEKDIDPEALKLQIDAEAAAKSEADAAKAEADAARVEAEAKKAETDETDETVDAETPENEEEN</sequence>
<feature type="chain" id="PRO_1000205393" description="Small ribosomal subunit protein bS6">
    <location>
        <begin position="1"/>
        <end position="155"/>
    </location>
</feature>
<feature type="region of interest" description="Disordered" evidence="2">
    <location>
        <begin position="115"/>
        <end position="155"/>
    </location>
</feature>
<feature type="compositionally biased region" description="Basic and acidic residues" evidence="2">
    <location>
        <begin position="115"/>
        <end position="137"/>
    </location>
</feature>
<feature type="compositionally biased region" description="Acidic residues" evidence="2">
    <location>
        <begin position="138"/>
        <end position="155"/>
    </location>
</feature>
<accession>C0QBV4</accession>
<dbReference type="EMBL" id="CP001087">
    <property type="protein sequence ID" value="ACN14966.1"/>
    <property type="molecule type" value="Genomic_DNA"/>
</dbReference>
<dbReference type="RefSeq" id="WP_015903752.1">
    <property type="nucleotide sequence ID" value="NC_012108.1"/>
</dbReference>
<dbReference type="SMR" id="C0QBV4"/>
<dbReference type="STRING" id="177437.HRM2_18640"/>
<dbReference type="KEGG" id="dat:HRM2_18640"/>
<dbReference type="eggNOG" id="COG0360">
    <property type="taxonomic scope" value="Bacteria"/>
</dbReference>
<dbReference type="HOGENOM" id="CLU_113441_4_0_7"/>
<dbReference type="OrthoDB" id="9812702at2"/>
<dbReference type="Proteomes" id="UP000000442">
    <property type="component" value="Chromosome"/>
</dbReference>
<dbReference type="GO" id="GO:0022627">
    <property type="term" value="C:cytosolic small ribosomal subunit"/>
    <property type="evidence" value="ECO:0007669"/>
    <property type="project" value="TreeGrafter"/>
</dbReference>
<dbReference type="GO" id="GO:0070181">
    <property type="term" value="F:small ribosomal subunit rRNA binding"/>
    <property type="evidence" value="ECO:0007669"/>
    <property type="project" value="TreeGrafter"/>
</dbReference>
<dbReference type="GO" id="GO:0003735">
    <property type="term" value="F:structural constituent of ribosome"/>
    <property type="evidence" value="ECO:0007669"/>
    <property type="project" value="InterPro"/>
</dbReference>
<dbReference type="GO" id="GO:0006412">
    <property type="term" value="P:translation"/>
    <property type="evidence" value="ECO:0007669"/>
    <property type="project" value="UniProtKB-UniRule"/>
</dbReference>
<dbReference type="CDD" id="cd00473">
    <property type="entry name" value="bS6"/>
    <property type="match status" value="1"/>
</dbReference>
<dbReference type="Gene3D" id="3.30.70.60">
    <property type="match status" value="1"/>
</dbReference>
<dbReference type="HAMAP" id="MF_00360">
    <property type="entry name" value="Ribosomal_bS6"/>
    <property type="match status" value="1"/>
</dbReference>
<dbReference type="InterPro" id="IPR000529">
    <property type="entry name" value="Ribosomal_bS6"/>
</dbReference>
<dbReference type="InterPro" id="IPR035980">
    <property type="entry name" value="Ribosomal_bS6_sf"/>
</dbReference>
<dbReference type="InterPro" id="IPR020814">
    <property type="entry name" value="Ribosomal_S6_plastid/chlpt"/>
</dbReference>
<dbReference type="InterPro" id="IPR014717">
    <property type="entry name" value="Transl_elong_EF1B/ribsomal_bS6"/>
</dbReference>
<dbReference type="NCBIfam" id="TIGR00166">
    <property type="entry name" value="S6"/>
    <property type="match status" value="1"/>
</dbReference>
<dbReference type="PANTHER" id="PTHR21011">
    <property type="entry name" value="MITOCHONDRIAL 28S RIBOSOMAL PROTEIN S6"/>
    <property type="match status" value="1"/>
</dbReference>
<dbReference type="PANTHER" id="PTHR21011:SF1">
    <property type="entry name" value="SMALL RIBOSOMAL SUBUNIT PROTEIN BS6M"/>
    <property type="match status" value="1"/>
</dbReference>
<dbReference type="Pfam" id="PF01250">
    <property type="entry name" value="Ribosomal_S6"/>
    <property type="match status" value="1"/>
</dbReference>
<dbReference type="SUPFAM" id="SSF54995">
    <property type="entry name" value="Ribosomal protein S6"/>
    <property type="match status" value="1"/>
</dbReference>
<gene>
    <name evidence="1" type="primary">rpsF</name>
    <name type="ordered locus">HRM2_18640</name>
</gene>
<proteinExistence type="inferred from homology"/>
<keyword id="KW-1185">Reference proteome</keyword>
<keyword id="KW-0687">Ribonucleoprotein</keyword>
<keyword id="KW-0689">Ribosomal protein</keyword>
<keyword id="KW-0694">RNA-binding</keyword>
<keyword id="KW-0699">rRNA-binding</keyword>